<accession>Q6XIR2</accession>
<keyword id="KW-0963">Cytoplasm</keyword>
<keyword id="KW-0217">Developmental protein</keyword>
<keyword id="KW-0256">Endoplasmic reticulum</keyword>
<keyword id="KW-0687">Ribonucleoprotein</keyword>
<keyword id="KW-0689">Ribosomal protein</keyword>
<keyword id="KW-0698">rRNA processing</keyword>
<keyword id="KW-0810">Translation regulation</keyword>
<reference evidence="6" key="1">
    <citation type="journal article" date="2003" name="Genome Res.">
        <title>An evolutionary analysis of orphan genes in Drosophila.</title>
        <authorList>
            <person name="Domazet-Loso T."/>
            <person name="Tautz D."/>
        </authorList>
    </citation>
    <scope>NUCLEOTIDE SEQUENCE [MRNA]</scope>
</reference>
<reference evidence="7" key="2">
    <citation type="journal article" date="2007" name="Nature">
        <title>Evolution of genes and genomes on the Drosophila phylogeny.</title>
        <authorList>
            <consortium name="Drosophila 12 genomes consortium"/>
        </authorList>
    </citation>
    <scope>NUCLEOTIDE SEQUENCE [LARGE SCALE GENOMIC DNA]</scope>
    <source>
        <strain evidence="7">Tai18E2 / Tucson 14021-0261.01</strain>
    </source>
</reference>
<name>RS21_DROYA</name>
<protein>
    <recommendedName>
        <fullName evidence="5">Small ribosomal subunit protein eS21</fullName>
    </recommendedName>
    <alternativeName>
        <fullName evidence="1">40S ribosomal protein S21</fullName>
    </alternativeName>
    <alternativeName>
        <fullName evidence="1">Overgrown hematopoietic organs at 23B</fullName>
    </alternativeName>
</protein>
<organism>
    <name type="scientific">Drosophila yakuba</name>
    <name type="common">Fruit fly</name>
    <dbReference type="NCBI Taxonomy" id="7245"/>
    <lineage>
        <taxon>Eukaryota</taxon>
        <taxon>Metazoa</taxon>
        <taxon>Ecdysozoa</taxon>
        <taxon>Arthropoda</taxon>
        <taxon>Hexapoda</taxon>
        <taxon>Insecta</taxon>
        <taxon>Pterygota</taxon>
        <taxon>Neoptera</taxon>
        <taxon>Endopterygota</taxon>
        <taxon>Diptera</taxon>
        <taxon>Brachycera</taxon>
        <taxon>Muscomorpha</taxon>
        <taxon>Ephydroidea</taxon>
        <taxon>Drosophilidae</taxon>
        <taxon>Drosophila</taxon>
        <taxon>Sophophora</taxon>
    </lineage>
</organism>
<evidence type="ECO:0000250" key="1">
    <source>
        <dbReference type="UniProtKB" id="O76927"/>
    </source>
</evidence>
<evidence type="ECO:0000250" key="2">
    <source>
        <dbReference type="UniProtKB" id="P63220"/>
    </source>
</evidence>
<evidence type="ECO:0000250" key="3">
    <source>
        <dbReference type="UniProtKB" id="P63221"/>
    </source>
</evidence>
<evidence type="ECO:0000255" key="4"/>
<evidence type="ECO:0000305" key="5"/>
<evidence type="ECO:0000312" key="6">
    <source>
        <dbReference type="EMBL" id="AAR09790.1"/>
    </source>
</evidence>
<evidence type="ECO:0000312" key="7">
    <source>
        <dbReference type="EMBL" id="EDW87456.1"/>
    </source>
</evidence>
<sequence length="83" mass="9167">MENDAGENVDLYVPRKCSASNRIIHAKDHASVQLSIVDVDPETGRQTDGSKTYAICGEIRRMGESDDCIVRLAKKDGIITKNF</sequence>
<proteinExistence type="inferred from homology"/>
<gene>
    <name type="primary">RpS21</name>
    <name type="synonym">oho23B</name>
    <name type="ORF">GE18186</name>
</gene>
<dbReference type="EMBL" id="AY231767">
    <property type="protein sequence ID" value="AAR09790.1"/>
    <property type="molecule type" value="mRNA"/>
</dbReference>
<dbReference type="EMBL" id="AY231999">
    <property type="protein sequence ID" value="AAR10022.1"/>
    <property type="molecule type" value="mRNA"/>
</dbReference>
<dbReference type="EMBL" id="CM000157">
    <property type="protein sequence ID" value="EDW87456.1"/>
    <property type="molecule type" value="Genomic_DNA"/>
</dbReference>
<dbReference type="SMR" id="Q6XIR2"/>
<dbReference type="EnsemblMetazoa" id="FBtr0264704">
    <property type="protein sequence ID" value="FBpp0263196"/>
    <property type="gene ID" value="FBgn0235617"/>
</dbReference>
<dbReference type="EnsemblMetazoa" id="XM_002087708.4">
    <property type="protein sequence ID" value="XP_002087744.1"/>
    <property type="gene ID" value="LOC6526636"/>
</dbReference>
<dbReference type="GeneID" id="6526636"/>
<dbReference type="KEGG" id="dya:Dyak_GE18186"/>
<dbReference type="CTD" id="6227"/>
<dbReference type="eggNOG" id="KOG3486">
    <property type="taxonomic scope" value="Eukaryota"/>
</dbReference>
<dbReference type="HOGENOM" id="CLU_167122_2_0_1"/>
<dbReference type="OMA" id="GESDACM"/>
<dbReference type="OrthoDB" id="278325at2759"/>
<dbReference type="PhylomeDB" id="Q6XIR2"/>
<dbReference type="ChiTaRS" id="RpS21">
    <property type="organism name" value="fly"/>
</dbReference>
<dbReference type="Proteomes" id="UP000002282">
    <property type="component" value="Chromosome 2L"/>
</dbReference>
<dbReference type="GO" id="GO:0022626">
    <property type="term" value="C:cytosolic ribosome"/>
    <property type="evidence" value="ECO:0007669"/>
    <property type="project" value="EnsemblMetazoa"/>
</dbReference>
<dbReference type="GO" id="GO:1990904">
    <property type="term" value="C:ribonucleoprotein complex"/>
    <property type="evidence" value="ECO:0007669"/>
    <property type="project" value="UniProtKB-KW"/>
</dbReference>
<dbReference type="GO" id="GO:0005840">
    <property type="term" value="C:ribosome"/>
    <property type="evidence" value="ECO:0000250"/>
    <property type="project" value="UniProtKB"/>
</dbReference>
<dbReference type="GO" id="GO:0005791">
    <property type="term" value="C:rough endoplasmic reticulum"/>
    <property type="evidence" value="ECO:0007669"/>
    <property type="project" value="UniProtKB-SubCell"/>
</dbReference>
<dbReference type="GO" id="GO:0043022">
    <property type="term" value="F:ribosome binding"/>
    <property type="evidence" value="ECO:0000250"/>
    <property type="project" value="UniProtKB"/>
</dbReference>
<dbReference type="GO" id="GO:0003735">
    <property type="term" value="F:structural constituent of ribosome"/>
    <property type="evidence" value="ECO:0007669"/>
    <property type="project" value="EnsemblMetazoa"/>
</dbReference>
<dbReference type="GO" id="GO:0048542">
    <property type="term" value="P:lymph gland development"/>
    <property type="evidence" value="ECO:0007669"/>
    <property type="project" value="EnsemblMetazoa"/>
</dbReference>
<dbReference type="GO" id="GO:0042127">
    <property type="term" value="P:regulation of cell population proliferation"/>
    <property type="evidence" value="ECO:0000250"/>
    <property type="project" value="UniProtKB"/>
</dbReference>
<dbReference type="GO" id="GO:0006417">
    <property type="term" value="P:regulation of translation"/>
    <property type="evidence" value="ECO:0007669"/>
    <property type="project" value="UniProtKB-KW"/>
</dbReference>
<dbReference type="GO" id="GO:0006364">
    <property type="term" value="P:rRNA processing"/>
    <property type="evidence" value="ECO:0007669"/>
    <property type="project" value="UniProtKB-KW"/>
</dbReference>
<dbReference type="GO" id="GO:0006412">
    <property type="term" value="P:translation"/>
    <property type="evidence" value="ECO:0007669"/>
    <property type="project" value="InterPro"/>
</dbReference>
<dbReference type="FunFam" id="3.30.1230.20:FF:000001">
    <property type="entry name" value="40S ribosomal protein S21"/>
    <property type="match status" value="1"/>
</dbReference>
<dbReference type="Gene3D" id="3.30.1230.20">
    <property type="match status" value="1"/>
</dbReference>
<dbReference type="InterPro" id="IPR001931">
    <property type="entry name" value="Ribosomal_eS21"/>
</dbReference>
<dbReference type="InterPro" id="IPR018279">
    <property type="entry name" value="Ribosomal_eS21_CS"/>
</dbReference>
<dbReference type="InterPro" id="IPR038579">
    <property type="entry name" value="Ribosomal_eS21_sf"/>
</dbReference>
<dbReference type="PANTHER" id="PTHR10442">
    <property type="entry name" value="40S RIBOSOMAL PROTEIN S21"/>
    <property type="match status" value="1"/>
</dbReference>
<dbReference type="Pfam" id="PF01249">
    <property type="entry name" value="Ribosomal_S21e"/>
    <property type="match status" value="1"/>
</dbReference>
<dbReference type="PIRSF" id="PIRSF002148">
    <property type="entry name" value="Ribosomal_S21e"/>
    <property type="match status" value="1"/>
</dbReference>
<dbReference type="PROSITE" id="PS00996">
    <property type="entry name" value="RIBOSOMAL_S21E"/>
    <property type="match status" value="1"/>
</dbReference>
<comment type="function">
    <text evidence="1">May be an associated component of the ribosome rather than a core structural subunit. May act as a translation initiation factor. Has a role in regulation of cell proliferation in the hematopoietic organs and the imaginal disks of larva (By similarity).</text>
</comment>
<comment type="subunit">
    <text evidence="1">Component of the 40S small ribosomal subunit. Interacts with sta.</text>
</comment>
<comment type="subcellular location">
    <subcellularLocation>
        <location evidence="2">Cytoplasm</location>
        <location evidence="2">Cytosol</location>
    </subcellularLocation>
    <subcellularLocation>
        <location evidence="2">Cytoplasm</location>
    </subcellularLocation>
    <subcellularLocation>
        <location evidence="3">Rough endoplasmic reticulum</location>
    </subcellularLocation>
    <text evidence="2 3">Detected on cytosolic polysomes (By similarity). Detected in ribosomes that are associated with the rough endoplasmic reticulum (By similarity).</text>
</comment>
<comment type="similarity">
    <text evidence="4">Belongs to the eukaryotic ribosomal protein eS21 family.</text>
</comment>
<feature type="chain" id="PRO_0000395426" description="Small ribosomal subunit protein eS21">
    <location>
        <begin position="1"/>
        <end position="83"/>
    </location>
</feature>